<reference key="1">
    <citation type="submission" date="2008-04" db="EMBL/GenBank/DDBJ databases">
        <title>Complete sequence of chromosome 1 of Burkholderia ambifaria MC40-6.</title>
        <authorList>
            <person name="Copeland A."/>
            <person name="Lucas S."/>
            <person name="Lapidus A."/>
            <person name="Glavina del Rio T."/>
            <person name="Dalin E."/>
            <person name="Tice H."/>
            <person name="Pitluck S."/>
            <person name="Chain P."/>
            <person name="Malfatti S."/>
            <person name="Shin M."/>
            <person name="Vergez L."/>
            <person name="Lang D."/>
            <person name="Schmutz J."/>
            <person name="Larimer F."/>
            <person name="Land M."/>
            <person name="Hauser L."/>
            <person name="Kyrpides N."/>
            <person name="Lykidis A."/>
            <person name="Ramette A."/>
            <person name="Konstantinidis K."/>
            <person name="Tiedje J."/>
            <person name="Richardson P."/>
        </authorList>
    </citation>
    <scope>NUCLEOTIDE SEQUENCE [LARGE SCALE GENOMIC DNA]</scope>
    <source>
        <strain>MC40-6</strain>
    </source>
</reference>
<protein>
    <recommendedName>
        <fullName evidence="1">Large ribosomal subunit protein uL2</fullName>
    </recommendedName>
    <alternativeName>
        <fullName evidence="3">50S ribosomal protein L2</fullName>
    </alternativeName>
</protein>
<keyword id="KW-0687">Ribonucleoprotein</keyword>
<keyword id="KW-0689">Ribosomal protein</keyword>
<keyword id="KW-0694">RNA-binding</keyword>
<keyword id="KW-0699">rRNA-binding</keyword>
<evidence type="ECO:0000255" key="1">
    <source>
        <dbReference type="HAMAP-Rule" id="MF_01320"/>
    </source>
</evidence>
<evidence type="ECO:0000256" key="2">
    <source>
        <dbReference type="SAM" id="MobiDB-lite"/>
    </source>
</evidence>
<evidence type="ECO:0000305" key="3"/>
<gene>
    <name evidence="1" type="primary">rplB</name>
    <name type="ordered locus">BamMC406_0279</name>
</gene>
<sequence length="275" mass="30101">MAIVKVKPTSPGRRAMVKVVNKNLHQGKPFAALLDSQSSTAGRNNNGRITTRHKGGGHKQHYRIVDFRRTKDGIPAKVERLEYDPNRSANIALVLYADGERRYIIAPKGLTVGQQLMSGSEAPIRAGNTLPIRNIPVGTTIHCIEMLPGKGAQMARSAGTSAMLLAREGVYAQVRLRSGEIRRVHIECRATIGEVGNEEHSLRQIGKAGANRWRGIRPTVRGVAMNPVDHPHGGGEGKTAAGRDPVSPWGTPAKGYRTRSNKRTTTMIVQRRHKR</sequence>
<accession>B1YRD3</accession>
<comment type="function">
    <text evidence="1">One of the primary rRNA binding proteins. Required for association of the 30S and 50S subunits to form the 70S ribosome, for tRNA binding and peptide bond formation. It has been suggested to have peptidyltransferase activity; this is somewhat controversial. Makes several contacts with the 16S rRNA in the 70S ribosome.</text>
</comment>
<comment type="subunit">
    <text evidence="1">Part of the 50S ribosomal subunit. Forms a bridge to the 30S subunit in the 70S ribosome.</text>
</comment>
<comment type="similarity">
    <text evidence="1">Belongs to the universal ribosomal protein uL2 family.</text>
</comment>
<name>RL2_BURA4</name>
<proteinExistence type="inferred from homology"/>
<feature type="chain" id="PRO_1000141515" description="Large ribosomal subunit protein uL2">
    <location>
        <begin position="1"/>
        <end position="275"/>
    </location>
</feature>
<feature type="region of interest" description="Disordered" evidence="2">
    <location>
        <begin position="35"/>
        <end position="59"/>
    </location>
</feature>
<feature type="region of interest" description="Disordered" evidence="2">
    <location>
        <begin position="224"/>
        <end position="275"/>
    </location>
</feature>
<feature type="compositionally biased region" description="Polar residues" evidence="2">
    <location>
        <begin position="35"/>
        <end position="49"/>
    </location>
</feature>
<feature type="compositionally biased region" description="Basic residues" evidence="2">
    <location>
        <begin position="50"/>
        <end position="59"/>
    </location>
</feature>
<dbReference type="EMBL" id="CP001025">
    <property type="protein sequence ID" value="ACB62780.1"/>
    <property type="molecule type" value="Genomic_DNA"/>
</dbReference>
<dbReference type="RefSeq" id="WP_006482900.1">
    <property type="nucleotide sequence ID" value="NC_010551.1"/>
</dbReference>
<dbReference type="SMR" id="B1YRD3"/>
<dbReference type="GeneID" id="93193448"/>
<dbReference type="KEGG" id="bac:BamMC406_0279"/>
<dbReference type="HOGENOM" id="CLU_036235_2_1_4"/>
<dbReference type="OrthoDB" id="9778722at2"/>
<dbReference type="Proteomes" id="UP000001680">
    <property type="component" value="Chromosome 1"/>
</dbReference>
<dbReference type="GO" id="GO:0015934">
    <property type="term" value="C:large ribosomal subunit"/>
    <property type="evidence" value="ECO:0007669"/>
    <property type="project" value="InterPro"/>
</dbReference>
<dbReference type="GO" id="GO:0019843">
    <property type="term" value="F:rRNA binding"/>
    <property type="evidence" value="ECO:0007669"/>
    <property type="project" value="UniProtKB-UniRule"/>
</dbReference>
<dbReference type="GO" id="GO:0003735">
    <property type="term" value="F:structural constituent of ribosome"/>
    <property type="evidence" value="ECO:0007669"/>
    <property type="project" value="InterPro"/>
</dbReference>
<dbReference type="GO" id="GO:0016740">
    <property type="term" value="F:transferase activity"/>
    <property type="evidence" value="ECO:0007669"/>
    <property type="project" value="InterPro"/>
</dbReference>
<dbReference type="GO" id="GO:0002181">
    <property type="term" value="P:cytoplasmic translation"/>
    <property type="evidence" value="ECO:0007669"/>
    <property type="project" value="TreeGrafter"/>
</dbReference>
<dbReference type="FunFam" id="2.30.30.30:FF:000001">
    <property type="entry name" value="50S ribosomal protein L2"/>
    <property type="match status" value="1"/>
</dbReference>
<dbReference type="FunFam" id="2.40.50.140:FF:000003">
    <property type="entry name" value="50S ribosomal protein L2"/>
    <property type="match status" value="1"/>
</dbReference>
<dbReference type="FunFam" id="4.10.950.10:FF:000001">
    <property type="entry name" value="50S ribosomal protein L2"/>
    <property type="match status" value="1"/>
</dbReference>
<dbReference type="Gene3D" id="2.30.30.30">
    <property type="match status" value="1"/>
</dbReference>
<dbReference type="Gene3D" id="2.40.50.140">
    <property type="entry name" value="Nucleic acid-binding proteins"/>
    <property type="match status" value="1"/>
</dbReference>
<dbReference type="Gene3D" id="4.10.950.10">
    <property type="entry name" value="Ribosomal protein L2, domain 3"/>
    <property type="match status" value="1"/>
</dbReference>
<dbReference type="HAMAP" id="MF_01320_B">
    <property type="entry name" value="Ribosomal_uL2_B"/>
    <property type="match status" value="1"/>
</dbReference>
<dbReference type="InterPro" id="IPR012340">
    <property type="entry name" value="NA-bd_OB-fold"/>
</dbReference>
<dbReference type="InterPro" id="IPR014722">
    <property type="entry name" value="Rib_uL2_dom2"/>
</dbReference>
<dbReference type="InterPro" id="IPR002171">
    <property type="entry name" value="Ribosomal_uL2"/>
</dbReference>
<dbReference type="InterPro" id="IPR005880">
    <property type="entry name" value="Ribosomal_uL2_bac/org-type"/>
</dbReference>
<dbReference type="InterPro" id="IPR022669">
    <property type="entry name" value="Ribosomal_uL2_C"/>
</dbReference>
<dbReference type="InterPro" id="IPR022671">
    <property type="entry name" value="Ribosomal_uL2_CS"/>
</dbReference>
<dbReference type="InterPro" id="IPR014726">
    <property type="entry name" value="Ribosomal_uL2_dom3"/>
</dbReference>
<dbReference type="InterPro" id="IPR022666">
    <property type="entry name" value="Ribosomal_uL2_RNA-bd_dom"/>
</dbReference>
<dbReference type="InterPro" id="IPR008991">
    <property type="entry name" value="Translation_prot_SH3-like_sf"/>
</dbReference>
<dbReference type="NCBIfam" id="TIGR01171">
    <property type="entry name" value="rplB_bact"/>
    <property type="match status" value="1"/>
</dbReference>
<dbReference type="PANTHER" id="PTHR13691:SF5">
    <property type="entry name" value="LARGE RIBOSOMAL SUBUNIT PROTEIN UL2M"/>
    <property type="match status" value="1"/>
</dbReference>
<dbReference type="PANTHER" id="PTHR13691">
    <property type="entry name" value="RIBOSOMAL PROTEIN L2"/>
    <property type="match status" value="1"/>
</dbReference>
<dbReference type="Pfam" id="PF00181">
    <property type="entry name" value="Ribosomal_L2"/>
    <property type="match status" value="1"/>
</dbReference>
<dbReference type="Pfam" id="PF03947">
    <property type="entry name" value="Ribosomal_L2_C"/>
    <property type="match status" value="1"/>
</dbReference>
<dbReference type="PIRSF" id="PIRSF002158">
    <property type="entry name" value="Ribosomal_L2"/>
    <property type="match status" value="1"/>
</dbReference>
<dbReference type="SMART" id="SM01383">
    <property type="entry name" value="Ribosomal_L2"/>
    <property type="match status" value="1"/>
</dbReference>
<dbReference type="SMART" id="SM01382">
    <property type="entry name" value="Ribosomal_L2_C"/>
    <property type="match status" value="1"/>
</dbReference>
<dbReference type="SUPFAM" id="SSF50249">
    <property type="entry name" value="Nucleic acid-binding proteins"/>
    <property type="match status" value="1"/>
</dbReference>
<dbReference type="SUPFAM" id="SSF50104">
    <property type="entry name" value="Translation proteins SH3-like domain"/>
    <property type="match status" value="1"/>
</dbReference>
<dbReference type="PROSITE" id="PS00467">
    <property type="entry name" value="RIBOSOMAL_L2"/>
    <property type="match status" value="1"/>
</dbReference>
<organism>
    <name type="scientific">Burkholderia ambifaria (strain MC40-6)</name>
    <dbReference type="NCBI Taxonomy" id="398577"/>
    <lineage>
        <taxon>Bacteria</taxon>
        <taxon>Pseudomonadati</taxon>
        <taxon>Pseudomonadota</taxon>
        <taxon>Betaproteobacteria</taxon>
        <taxon>Burkholderiales</taxon>
        <taxon>Burkholderiaceae</taxon>
        <taxon>Burkholderia</taxon>
        <taxon>Burkholderia cepacia complex</taxon>
    </lineage>
</organism>